<gene>
    <name evidence="1" type="primary">psbH</name>
    <name type="ordered locus">NATL1_03301</name>
</gene>
<comment type="function">
    <text evidence="1">One of the components of the core complex of photosystem II (PSII), required for its stability and/or assembly. PSII is a light-driven water:plastoquinone oxidoreductase that uses light energy to abstract electrons from H(2)O, generating O(2) and a proton gradient subsequently used for ATP formation. It consists of a core antenna complex that captures photons, and an electron transfer chain that converts photonic excitation into a charge separation.</text>
</comment>
<comment type="subunit">
    <text evidence="2">PSII is composed of 1 copy each of membrane proteins PsbA, PsbB, PsbC, PsbD, PsbE, PsbF, PsbH, PsbI, PsbJ, PsbK, PsbL, PsbM, PsbT, PsbX, PsbY, Psb30/Ycf12, peripheral proteins PsbO, CyanoQ (PsbQ), PsbU, PsbV and a large number of cofactors. It forms dimeric complexes.</text>
</comment>
<comment type="subcellular location">
    <subcellularLocation>
        <location evidence="1">Cellular thylakoid membrane</location>
        <topology evidence="1">Single-pass membrane protein</topology>
    </subcellularLocation>
</comment>
<comment type="similarity">
    <text evidence="1">Belongs to the PsbH family.</text>
</comment>
<feature type="chain" id="PRO_1000046586" description="Photosystem II reaction center protein H">
    <location>
        <begin position="1"/>
        <end position="65"/>
    </location>
</feature>
<feature type="transmembrane region" description="Helical" evidence="1">
    <location>
        <begin position="27"/>
        <end position="47"/>
    </location>
</feature>
<reference key="1">
    <citation type="journal article" date="2007" name="PLoS Genet.">
        <title>Patterns and implications of gene gain and loss in the evolution of Prochlorococcus.</title>
        <authorList>
            <person name="Kettler G.C."/>
            <person name="Martiny A.C."/>
            <person name="Huang K."/>
            <person name="Zucker J."/>
            <person name="Coleman M.L."/>
            <person name="Rodrigue S."/>
            <person name="Chen F."/>
            <person name="Lapidus A."/>
            <person name="Ferriera S."/>
            <person name="Johnson J."/>
            <person name="Steglich C."/>
            <person name="Church G.M."/>
            <person name="Richardson P."/>
            <person name="Chisholm S.W."/>
        </authorList>
    </citation>
    <scope>NUCLEOTIDE SEQUENCE [LARGE SCALE GENOMIC DNA]</scope>
    <source>
        <strain>NATL1A</strain>
    </source>
</reference>
<protein>
    <recommendedName>
        <fullName evidence="1">Photosystem II reaction center protein H</fullName>
        <shortName evidence="1">PSII-H</shortName>
    </recommendedName>
</protein>
<proteinExistence type="inferred from homology"/>
<sequence>MGQKTALGSLLKSIGNSGQGKVVPGWGAVPVMAFIGVLLLVFLVIMLQIYNQSLLLQGFSVDWNG</sequence>
<evidence type="ECO:0000255" key="1">
    <source>
        <dbReference type="HAMAP-Rule" id="MF_00752"/>
    </source>
</evidence>
<evidence type="ECO:0000305" key="2"/>
<keyword id="KW-0472">Membrane</keyword>
<keyword id="KW-0602">Photosynthesis</keyword>
<keyword id="KW-0604">Photosystem II</keyword>
<keyword id="KW-0793">Thylakoid</keyword>
<keyword id="KW-0812">Transmembrane</keyword>
<keyword id="KW-1133">Transmembrane helix</keyword>
<organism>
    <name type="scientific">Prochlorococcus marinus (strain NATL1A)</name>
    <dbReference type="NCBI Taxonomy" id="167555"/>
    <lineage>
        <taxon>Bacteria</taxon>
        <taxon>Bacillati</taxon>
        <taxon>Cyanobacteriota</taxon>
        <taxon>Cyanophyceae</taxon>
        <taxon>Synechococcales</taxon>
        <taxon>Prochlorococcaceae</taxon>
        <taxon>Prochlorococcus</taxon>
    </lineage>
</organism>
<dbReference type="EMBL" id="CP000553">
    <property type="protein sequence ID" value="ABM74894.1"/>
    <property type="molecule type" value="Genomic_DNA"/>
</dbReference>
<dbReference type="RefSeq" id="WP_011294251.1">
    <property type="nucleotide sequence ID" value="NC_008819.1"/>
</dbReference>
<dbReference type="SMR" id="A2C084"/>
<dbReference type="KEGG" id="pme:NATL1_03301"/>
<dbReference type="eggNOG" id="ENOG50332MV">
    <property type="taxonomic scope" value="Bacteria"/>
</dbReference>
<dbReference type="HOGENOM" id="CLU_190203_0_0_3"/>
<dbReference type="Proteomes" id="UP000002592">
    <property type="component" value="Chromosome"/>
</dbReference>
<dbReference type="GO" id="GO:0009523">
    <property type="term" value="C:photosystem II"/>
    <property type="evidence" value="ECO:0007669"/>
    <property type="project" value="UniProtKB-KW"/>
</dbReference>
<dbReference type="GO" id="GO:0031676">
    <property type="term" value="C:plasma membrane-derived thylakoid membrane"/>
    <property type="evidence" value="ECO:0007669"/>
    <property type="project" value="UniProtKB-SubCell"/>
</dbReference>
<dbReference type="GO" id="GO:0042301">
    <property type="term" value="F:phosphate ion binding"/>
    <property type="evidence" value="ECO:0007669"/>
    <property type="project" value="InterPro"/>
</dbReference>
<dbReference type="GO" id="GO:0015979">
    <property type="term" value="P:photosynthesis"/>
    <property type="evidence" value="ECO:0007669"/>
    <property type="project" value="UniProtKB-UniRule"/>
</dbReference>
<dbReference type="GO" id="GO:0050821">
    <property type="term" value="P:protein stabilization"/>
    <property type="evidence" value="ECO:0007669"/>
    <property type="project" value="InterPro"/>
</dbReference>
<dbReference type="Gene3D" id="1.20.5.880">
    <property type="entry name" value="Photosystem II reaction center protein H"/>
    <property type="match status" value="1"/>
</dbReference>
<dbReference type="HAMAP" id="MF_00752">
    <property type="entry name" value="PSII_PsbH"/>
    <property type="match status" value="1"/>
</dbReference>
<dbReference type="InterPro" id="IPR001056">
    <property type="entry name" value="PSII_PsbH"/>
</dbReference>
<dbReference type="InterPro" id="IPR036863">
    <property type="entry name" value="PSII_PsbH_sf"/>
</dbReference>
<dbReference type="NCBIfam" id="NF002728">
    <property type="entry name" value="PRK02624.1"/>
    <property type="match status" value="1"/>
</dbReference>
<dbReference type="PANTHER" id="PTHR34469">
    <property type="entry name" value="PHOTOSYSTEM II REACTION CENTER PROTEIN H"/>
    <property type="match status" value="1"/>
</dbReference>
<dbReference type="PANTHER" id="PTHR34469:SF4">
    <property type="entry name" value="PHOTOSYSTEM II REACTION CENTER PROTEIN H"/>
    <property type="match status" value="1"/>
</dbReference>
<dbReference type="Pfam" id="PF00737">
    <property type="entry name" value="PsbH"/>
    <property type="match status" value="1"/>
</dbReference>
<dbReference type="SUPFAM" id="SSF161025">
    <property type="entry name" value="Photosystem II 10 kDa phosphoprotein PsbH"/>
    <property type="match status" value="1"/>
</dbReference>
<name>PSBH_PROM1</name>
<accession>A2C084</accession>